<protein>
    <recommendedName>
        <fullName evidence="1">DNA mismatch repair protein MutL</fullName>
    </recommendedName>
</protein>
<reference key="1">
    <citation type="submission" date="2008-06" db="EMBL/GenBank/DDBJ databases">
        <title>Complete sequence of Chloroherpeton thalassium ATCC 35110.</title>
        <authorList>
            <consortium name="US DOE Joint Genome Institute"/>
            <person name="Lucas S."/>
            <person name="Copeland A."/>
            <person name="Lapidus A."/>
            <person name="Glavina del Rio T."/>
            <person name="Dalin E."/>
            <person name="Tice H."/>
            <person name="Bruce D."/>
            <person name="Goodwin L."/>
            <person name="Pitluck S."/>
            <person name="Schmutz J."/>
            <person name="Larimer F."/>
            <person name="Land M."/>
            <person name="Hauser L."/>
            <person name="Kyrpides N."/>
            <person name="Mikhailova N."/>
            <person name="Liu Z."/>
            <person name="Li T."/>
            <person name="Zhao F."/>
            <person name="Overmann J."/>
            <person name="Bryant D.A."/>
            <person name="Richardson P."/>
        </authorList>
    </citation>
    <scope>NUCLEOTIDE SEQUENCE [LARGE SCALE GENOMIC DNA]</scope>
    <source>
        <strain>ATCC 35110 / GB-78</strain>
    </source>
</reference>
<feature type="chain" id="PRO_1000096640" description="DNA mismatch repair protein MutL">
    <location>
        <begin position="1"/>
        <end position="640"/>
    </location>
</feature>
<feature type="region of interest" description="Disordered" evidence="2">
    <location>
        <begin position="332"/>
        <end position="353"/>
    </location>
</feature>
<feature type="region of interest" description="Disordered" evidence="2">
    <location>
        <begin position="408"/>
        <end position="431"/>
    </location>
</feature>
<name>MUTL_CHLT3</name>
<evidence type="ECO:0000255" key="1">
    <source>
        <dbReference type="HAMAP-Rule" id="MF_00149"/>
    </source>
</evidence>
<evidence type="ECO:0000256" key="2">
    <source>
        <dbReference type="SAM" id="MobiDB-lite"/>
    </source>
</evidence>
<comment type="function">
    <text evidence="1">This protein is involved in the repair of mismatches in DNA. It is required for dam-dependent methyl-directed DNA mismatch repair. May act as a 'molecular matchmaker', a protein that promotes the formation of a stable complex between two or more DNA-binding proteins in an ATP-dependent manner without itself being part of a final effector complex.</text>
</comment>
<comment type="similarity">
    <text evidence="1">Belongs to the DNA mismatch repair MutL/HexB family.</text>
</comment>
<keyword id="KW-0227">DNA damage</keyword>
<keyword id="KW-0234">DNA repair</keyword>
<keyword id="KW-1185">Reference proteome</keyword>
<proteinExistence type="inferred from homology"/>
<dbReference type="EMBL" id="CP001100">
    <property type="protein sequence ID" value="ACF13199.1"/>
    <property type="molecule type" value="Genomic_DNA"/>
</dbReference>
<dbReference type="RefSeq" id="WP_012499283.1">
    <property type="nucleotide sequence ID" value="NC_011026.1"/>
</dbReference>
<dbReference type="SMR" id="B3QW86"/>
<dbReference type="STRING" id="517418.Ctha_0730"/>
<dbReference type="KEGG" id="cts:Ctha_0730"/>
<dbReference type="eggNOG" id="COG0323">
    <property type="taxonomic scope" value="Bacteria"/>
</dbReference>
<dbReference type="HOGENOM" id="CLU_004131_4_0_10"/>
<dbReference type="OrthoDB" id="9763467at2"/>
<dbReference type="Proteomes" id="UP000001208">
    <property type="component" value="Chromosome"/>
</dbReference>
<dbReference type="GO" id="GO:0032300">
    <property type="term" value="C:mismatch repair complex"/>
    <property type="evidence" value="ECO:0007669"/>
    <property type="project" value="InterPro"/>
</dbReference>
<dbReference type="GO" id="GO:0005524">
    <property type="term" value="F:ATP binding"/>
    <property type="evidence" value="ECO:0007669"/>
    <property type="project" value="InterPro"/>
</dbReference>
<dbReference type="GO" id="GO:0016887">
    <property type="term" value="F:ATP hydrolysis activity"/>
    <property type="evidence" value="ECO:0007669"/>
    <property type="project" value="InterPro"/>
</dbReference>
<dbReference type="GO" id="GO:0140664">
    <property type="term" value="F:ATP-dependent DNA damage sensor activity"/>
    <property type="evidence" value="ECO:0007669"/>
    <property type="project" value="InterPro"/>
</dbReference>
<dbReference type="GO" id="GO:0030983">
    <property type="term" value="F:mismatched DNA binding"/>
    <property type="evidence" value="ECO:0007669"/>
    <property type="project" value="InterPro"/>
</dbReference>
<dbReference type="GO" id="GO:0006298">
    <property type="term" value="P:mismatch repair"/>
    <property type="evidence" value="ECO:0007669"/>
    <property type="project" value="UniProtKB-UniRule"/>
</dbReference>
<dbReference type="CDD" id="cd16926">
    <property type="entry name" value="HATPase_MutL-MLH-PMS-like"/>
    <property type="match status" value="1"/>
</dbReference>
<dbReference type="CDD" id="cd00782">
    <property type="entry name" value="MutL_Trans"/>
    <property type="match status" value="1"/>
</dbReference>
<dbReference type="FunFam" id="3.30.565.10:FF:000003">
    <property type="entry name" value="DNA mismatch repair endonuclease MutL"/>
    <property type="match status" value="1"/>
</dbReference>
<dbReference type="Gene3D" id="3.30.230.10">
    <property type="match status" value="1"/>
</dbReference>
<dbReference type="Gene3D" id="3.30.565.10">
    <property type="entry name" value="Histidine kinase-like ATPase, C-terminal domain"/>
    <property type="match status" value="1"/>
</dbReference>
<dbReference type="Gene3D" id="3.30.1540.20">
    <property type="entry name" value="MutL, C-terminal domain, dimerisation subdomain"/>
    <property type="match status" value="1"/>
</dbReference>
<dbReference type="Gene3D" id="3.30.1370.100">
    <property type="entry name" value="MutL, C-terminal domain, regulatory subdomain"/>
    <property type="match status" value="1"/>
</dbReference>
<dbReference type="HAMAP" id="MF_00149">
    <property type="entry name" value="DNA_mis_repair"/>
    <property type="match status" value="1"/>
</dbReference>
<dbReference type="InterPro" id="IPR014762">
    <property type="entry name" value="DNA_mismatch_repair_CS"/>
</dbReference>
<dbReference type="InterPro" id="IPR020667">
    <property type="entry name" value="DNA_mismatch_repair_MutL"/>
</dbReference>
<dbReference type="InterPro" id="IPR013507">
    <property type="entry name" value="DNA_mismatch_S5_2-like"/>
</dbReference>
<dbReference type="InterPro" id="IPR036890">
    <property type="entry name" value="HATPase_C_sf"/>
</dbReference>
<dbReference type="InterPro" id="IPR002099">
    <property type="entry name" value="MutL/Mlh/PMS"/>
</dbReference>
<dbReference type="InterPro" id="IPR038973">
    <property type="entry name" value="MutL/Mlh/Pms-like"/>
</dbReference>
<dbReference type="InterPro" id="IPR014790">
    <property type="entry name" value="MutL_C"/>
</dbReference>
<dbReference type="InterPro" id="IPR042120">
    <property type="entry name" value="MutL_C_dimsub"/>
</dbReference>
<dbReference type="InterPro" id="IPR042121">
    <property type="entry name" value="MutL_C_regsub"/>
</dbReference>
<dbReference type="InterPro" id="IPR037198">
    <property type="entry name" value="MutL_C_sf"/>
</dbReference>
<dbReference type="InterPro" id="IPR020568">
    <property type="entry name" value="Ribosomal_Su5_D2-typ_SF"/>
</dbReference>
<dbReference type="InterPro" id="IPR014721">
    <property type="entry name" value="Ribsml_uS5_D2-typ_fold_subgr"/>
</dbReference>
<dbReference type="NCBIfam" id="TIGR00585">
    <property type="entry name" value="mutl"/>
    <property type="match status" value="1"/>
</dbReference>
<dbReference type="PANTHER" id="PTHR10073">
    <property type="entry name" value="DNA MISMATCH REPAIR PROTEIN MLH, PMS, MUTL"/>
    <property type="match status" value="1"/>
</dbReference>
<dbReference type="PANTHER" id="PTHR10073:SF12">
    <property type="entry name" value="DNA MISMATCH REPAIR PROTEIN MLH1"/>
    <property type="match status" value="1"/>
</dbReference>
<dbReference type="Pfam" id="PF01119">
    <property type="entry name" value="DNA_mis_repair"/>
    <property type="match status" value="1"/>
</dbReference>
<dbReference type="Pfam" id="PF13589">
    <property type="entry name" value="HATPase_c_3"/>
    <property type="match status" value="1"/>
</dbReference>
<dbReference type="Pfam" id="PF08676">
    <property type="entry name" value="MutL_C"/>
    <property type="match status" value="1"/>
</dbReference>
<dbReference type="SMART" id="SM01340">
    <property type="entry name" value="DNA_mis_repair"/>
    <property type="match status" value="1"/>
</dbReference>
<dbReference type="SMART" id="SM00853">
    <property type="entry name" value="MutL_C"/>
    <property type="match status" value="1"/>
</dbReference>
<dbReference type="SUPFAM" id="SSF55874">
    <property type="entry name" value="ATPase domain of HSP90 chaperone/DNA topoisomerase II/histidine kinase"/>
    <property type="match status" value="1"/>
</dbReference>
<dbReference type="SUPFAM" id="SSF118116">
    <property type="entry name" value="DNA mismatch repair protein MutL"/>
    <property type="match status" value="1"/>
</dbReference>
<dbReference type="SUPFAM" id="SSF54211">
    <property type="entry name" value="Ribosomal protein S5 domain 2-like"/>
    <property type="match status" value="1"/>
</dbReference>
<dbReference type="PROSITE" id="PS00058">
    <property type="entry name" value="DNA_MISMATCH_REPAIR_1"/>
    <property type="match status" value="1"/>
</dbReference>
<gene>
    <name evidence="1" type="primary">mutL</name>
    <name type="ordered locus">Ctha_0730</name>
</gene>
<accession>B3QW86</accession>
<organism>
    <name type="scientific">Chloroherpeton thalassium (strain ATCC 35110 / GB-78)</name>
    <dbReference type="NCBI Taxonomy" id="517418"/>
    <lineage>
        <taxon>Bacteria</taxon>
        <taxon>Pseudomonadati</taxon>
        <taxon>Chlorobiota</taxon>
        <taxon>Chlorobiia</taxon>
        <taxon>Chlorobiales</taxon>
        <taxon>Chloroherpetonaceae</taxon>
        <taxon>Chloroherpeton</taxon>
    </lineage>
</organism>
<sequence>MSLIKKLPDIVANKISAGEVVQRPASAVKELLENAIDAGADEITLAIKAAGKTLIQVIDNGCGLSEEDATLCFERFATSKISDVGDLENLHTLGFRGEALASIASVSQVELKTKRYDDRTGTLVKISGGRFEEVSRTETPNGTAFSIRNLFYNVPARRKFLKTNATEYKHIFETVQAQTLVYPDIKWRFYSDDEEIFSFLNNNLSERLDYFFGKDFSQNLIEFTEENDFMKLRGYLGKPAMMKRTKNQQFLFINNRVTQSKLLSSAIMTAYGELLGEREYPFFLIYMDIAPHYIDVNVHPTKMEVKFDDERNIYNMVHSVVKHRIKTLDFSPNVQVEEKPDSPRPTGESFNFPGVAKRLSYNDRDADMRSSNALFRDYKTYYKAQDERAEPGFFANPKREMDWRSSLPAHTEASLTPPKQAEPEGNPTFHDGSRQMEIFIQSRDDEPATAGQERFVWQLHNTYILTQIKSGLLIIDQHVAHERILYERAIAVMESNVPNSQQLLFPHSAKLSAWEFDVLKEIKTDLVQLGFSLRILDQRTVLVEGIPPDVMPGREERILHEMLEQYQDYQQNLKLEQRDNVAKSYACRSSIMAGQKLSRNEMTSLIDQLFATSMPYVCPHGRPIIIKLSIEELDKMFGRS</sequence>